<feature type="chain" id="PRO_1000074478" description="Crossover junction endodeoxyribonuclease RuvC">
    <location>
        <begin position="1"/>
        <end position="173"/>
    </location>
</feature>
<feature type="active site" evidence="1">
    <location>
        <position position="11"/>
    </location>
</feature>
<feature type="active site" evidence="1">
    <location>
        <position position="71"/>
    </location>
</feature>
<feature type="active site" evidence="1">
    <location>
        <position position="143"/>
    </location>
</feature>
<feature type="binding site" evidence="1">
    <location>
        <position position="11"/>
    </location>
    <ligand>
        <name>Mg(2+)</name>
        <dbReference type="ChEBI" id="CHEBI:18420"/>
        <label>1</label>
    </ligand>
</feature>
<feature type="binding site" evidence="1">
    <location>
        <position position="71"/>
    </location>
    <ligand>
        <name>Mg(2+)</name>
        <dbReference type="ChEBI" id="CHEBI:18420"/>
        <label>2</label>
    </ligand>
</feature>
<feature type="binding site" evidence="1">
    <location>
        <position position="143"/>
    </location>
    <ligand>
        <name>Mg(2+)</name>
        <dbReference type="ChEBI" id="CHEBI:18420"/>
        <label>1</label>
    </ligand>
</feature>
<comment type="function">
    <text evidence="1">The RuvA-RuvB-RuvC complex processes Holliday junction (HJ) DNA during genetic recombination and DNA repair. Endonuclease that resolves HJ intermediates. Cleaves cruciform DNA by making single-stranded nicks across the HJ at symmetrical positions within the homologous arms, yielding a 5'-phosphate and a 3'-hydroxyl group; requires a central core of homology in the junction. The consensus cleavage sequence is 5'-(A/T)TT(C/G)-3'. Cleavage occurs on the 3'-side of the TT dinucleotide at the point of strand exchange. HJ branch migration catalyzed by RuvA-RuvB allows RuvC to scan DNA until it finds its consensus sequence, where it cleaves and resolves the cruciform DNA.</text>
</comment>
<comment type="catalytic activity">
    <reaction evidence="1">
        <text>Endonucleolytic cleavage at a junction such as a reciprocal single-stranded crossover between two homologous DNA duplexes (Holliday junction).</text>
        <dbReference type="EC" id="3.1.21.10"/>
    </reaction>
</comment>
<comment type="cofactor">
    <cofactor evidence="1">
        <name>Mg(2+)</name>
        <dbReference type="ChEBI" id="CHEBI:18420"/>
    </cofactor>
    <text evidence="1">Binds 2 Mg(2+) ion per subunit.</text>
</comment>
<comment type="subunit">
    <text evidence="1">Homodimer which binds Holliday junction (HJ) DNA. The HJ becomes 2-fold symmetrical on binding to RuvC with unstacked arms; it has a different conformation from HJ DNA in complex with RuvA. In the full resolvosome a probable DNA-RuvA(4)-RuvB(12)-RuvC(2) complex forms which resolves the HJ.</text>
</comment>
<comment type="subcellular location">
    <subcellularLocation>
        <location evidence="1">Cytoplasm</location>
    </subcellularLocation>
</comment>
<comment type="similarity">
    <text evidence="1">Belongs to the RuvC family.</text>
</comment>
<proteinExistence type="inferred from homology"/>
<name>RUVC_BRUC2</name>
<sequence length="173" mass="18455">MKETIRIIGIDPGLRRTGWGIVESLGNSLHFIGSGTVTSNAEMDLASRLCQLHEGLSKVLHEFMPHEAAVEHTFVNKDATATLKLGQARGIALLAPAQAGLPVAEYAPNAVKKAVIGVGHGEKQQIHMMVKVLMPRASFDTSDAADALAIAICHAHHRQSIVSARRMQALLAG</sequence>
<organism>
    <name type="scientific">Brucella canis (strain ATCC 23365 / NCTC 10854 / RM-666)</name>
    <dbReference type="NCBI Taxonomy" id="483179"/>
    <lineage>
        <taxon>Bacteria</taxon>
        <taxon>Pseudomonadati</taxon>
        <taxon>Pseudomonadota</taxon>
        <taxon>Alphaproteobacteria</taxon>
        <taxon>Hyphomicrobiales</taxon>
        <taxon>Brucellaceae</taxon>
        <taxon>Brucella/Ochrobactrum group</taxon>
        <taxon>Brucella</taxon>
    </lineage>
</organism>
<keyword id="KW-0963">Cytoplasm</keyword>
<keyword id="KW-0227">DNA damage</keyword>
<keyword id="KW-0233">DNA recombination</keyword>
<keyword id="KW-0234">DNA repair</keyword>
<keyword id="KW-0238">DNA-binding</keyword>
<keyword id="KW-0255">Endonuclease</keyword>
<keyword id="KW-0378">Hydrolase</keyword>
<keyword id="KW-0460">Magnesium</keyword>
<keyword id="KW-0479">Metal-binding</keyword>
<keyword id="KW-0540">Nuclease</keyword>
<keyword id="KW-1185">Reference proteome</keyword>
<protein>
    <recommendedName>
        <fullName evidence="1">Crossover junction endodeoxyribonuclease RuvC</fullName>
        <ecNumber evidence="1">3.1.21.10</ecNumber>
    </recommendedName>
    <alternativeName>
        <fullName evidence="1">Holliday junction nuclease RuvC</fullName>
    </alternativeName>
    <alternativeName>
        <fullName evidence="1">Holliday junction resolvase RuvC</fullName>
    </alternativeName>
</protein>
<gene>
    <name evidence="1" type="primary">ruvC</name>
    <name type="ordered locus">BCAN_A1743</name>
</gene>
<reference key="1">
    <citation type="submission" date="2007-10" db="EMBL/GenBank/DDBJ databases">
        <title>Brucella canis ATCC 23365 whole genome shotgun sequencing project.</title>
        <authorList>
            <person name="Setubal J.C."/>
            <person name="Bowns C."/>
            <person name="Boyle S."/>
            <person name="Crasta O.R."/>
            <person name="Czar M.J."/>
            <person name="Dharmanolla C."/>
            <person name="Gillespie J.J."/>
            <person name="Kenyon R.W."/>
            <person name="Lu J."/>
            <person name="Mane S."/>
            <person name="Mohapatra S."/>
            <person name="Nagrani S."/>
            <person name="Purkayastha A."/>
            <person name="Rajasimha H.K."/>
            <person name="Shallom J.M."/>
            <person name="Shallom S."/>
            <person name="Shukla M."/>
            <person name="Snyder E.E."/>
            <person name="Sobral B.W."/>
            <person name="Wattam A.R."/>
            <person name="Will R."/>
            <person name="Williams K."/>
            <person name="Yoo H."/>
            <person name="Bruce D."/>
            <person name="Detter C."/>
            <person name="Munk C."/>
            <person name="Brettin T.S."/>
        </authorList>
    </citation>
    <scope>NUCLEOTIDE SEQUENCE [LARGE SCALE GENOMIC DNA]</scope>
    <source>
        <strain>ATCC 23365 / NCTC 10854 / RM-666</strain>
    </source>
</reference>
<accession>A9M7K2</accession>
<evidence type="ECO:0000255" key="1">
    <source>
        <dbReference type="HAMAP-Rule" id="MF_00034"/>
    </source>
</evidence>
<dbReference type="EC" id="3.1.21.10" evidence="1"/>
<dbReference type="EMBL" id="CP000872">
    <property type="protein sequence ID" value="ABX62749.1"/>
    <property type="molecule type" value="Genomic_DNA"/>
</dbReference>
<dbReference type="RefSeq" id="WP_002964793.1">
    <property type="nucleotide sequence ID" value="NC_010103.1"/>
</dbReference>
<dbReference type="SMR" id="A9M7K2"/>
<dbReference type="GeneID" id="93017933"/>
<dbReference type="KEGG" id="bcs:BCAN_A1743"/>
<dbReference type="HOGENOM" id="CLU_091257_1_0_5"/>
<dbReference type="PhylomeDB" id="A9M7K2"/>
<dbReference type="Proteomes" id="UP000001385">
    <property type="component" value="Chromosome I"/>
</dbReference>
<dbReference type="GO" id="GO:0005737">
    <property type="term" value="C:cytoplasm"/>
    <property type="evidence" value="ECO:0007669"/>
    <property type="project" value="UniProtKB-SubCell"/>
</dbReference>
<dbReference type="GO" id="GO:0048476">
    <property type="term" value="C:Holliday junction resolvase complex"/>
    <property type="evidence" value="ECO:0007669"/>
    <property type="project" value="UniProtKB-UniRule"/>
</dbReference>
<dbReference type="GO" id="GO:0008821">
    <property type="term" value="F:crossover junction DNA endonuclease activity"/>
    <property type="evidence" value="ECO:0007669"/>
    <property type="project" value="UniProtKB-UniRule"/>
</dbReference>
<dbReference type="GO" id="GO:0003677">
    <property type="term" value="F:DNA binding"/>
    <property type="evidence" value="ECO:0007669"/>
    <property type="project" value="UniProtKB-KW"/>
</dbReference>
<dbReference type="GO" id="GO:0000287">
    <property type="term" value="F:magnesium ion binding"/>
    <property type="evidence" value="ECO:0007669"/>
    <property type="project" value="UniProtKB-UniRule"/>
</dbReference>
<dbReference type="GO" id="GO:0006310">
    <property type="term" value="P:DNA recombination"/>
    <property type="evidence" value="ECO:0007669"/>
    <property type="project" value="UniProtKB-UniRule"/>
</dbReference>
<dbReference type="GO" id="GO:0006281">
    <property type="term" value="P:DNA repair"/>
    <property type="evidence" value="ECO:0007669"/>
    <property type="project" value="UniProtKB-UniRule"/>
</dbReference>
<dbReference type="CDD" id="cd16962">
    <property type="entry name" value="RuvC"/>
    <property type="match status" value="1"/>
</dbReference>
<dbReference type="FunFam" id="3.30.420.10:FF:000002">
    <property type="entry name" value="Crossover junction endodeoxyribonuclease RuvC"/>
    <property type="match status" value="1"/>
</dbReference>
<dbReference type="Gene3D" id="3.30.420.10">
    <property type="entry name" value="Ribonuclease H-like superfamily/Ribonuclease H"/>
    <property type="match status" value="1"/>
</dbReference>
<dbReference type="HAMAP" id="MF_00034">
    <property type="entry name" value="RuvC"/>
    <property type="match status" value="1"/>
</dbReference>
<dbReference type="InterPro" id="IPR012337">
    <property type="entry name" value="RNaseH-like_sf"/>
</dbReference>
<dbReference type="InterPro" id="IPR036397">
    <property type="entry name" value="RNaseH_sf"/>
</dbReference>
<dbReference type="InterPro" id="IPR020563">
    <property type="entry name" value="X-over_junc_endoDNase_Mg_BS"/>
</dbReference>
<dbReference type="InterPro" id="IPR002176">
    <property type="entry name" value="X-over_junc_endoDNase_RuvC"/>
</dbReference>
<dbReference type="NCBIfam" id="TIGR00228">
    <property type="entry name" value="ruvC"/>
    <property type="match status" value="1"/>
</dbReference>
<dbReference type="PANTHER" id="PTHR30194">
    <property type="entry name" value="CROSSOVER JUNCTION ENDODEOXYRIBONUCLEASE RUVC"/>
    <property type="match status" value="1"/>
</dbReference>
<dbReference type="PANTHER" id="PTHR30194:SF3">
    <property type="entry name" value="CROSSOVER JUNCTION ENDODEOXYRIBONUCLEASE RUVC"/>
    <property type="match status" value="1"/>
</dbReference>
<dbReference type="Pfam" id="PF02075">
    <property type="entry name" value="RuvC"/>
    <property type="match status" value="1"/>
</dbReference>
<dbReference type="PRINTS" id="PR00696">
    <property type="entry name" value="RSOLVASERUVC"/>
</dbReference>
<dbReference type="SUPFAM" id="SSF53098">
    <property type="entry name" value="Ribonuclease H-like"/>
    <property type="match status" value="1"/>
</dbReference>
<dbReference type="PROSITE" id="PS01321">
    <property type="entry name" value="RUVC"/>
    <property type="match status" value="1"/>
</dbReference>